<comment type="function">
    <text evidence="2 3">May play a role in cortex development as part of the Notch signaling pathway. Downstream of Notch may repress the expression of proneural genes and inhibit neuronal differentiation thereby maintaining neural progenitors (PubMed:19906856). May also play a role in preimplentation embryo development (PubMed:26178919).</text>
</comment>
<comment type="subcellular location">
    <subcellularLocation>
        <location evidence="2">Nucleus</location>
    </subcellularLocation>
    <subcellularLocation>
        <location evidence="3">Nucleus</location>
        <location evidence="3">Nucleolus</location>
    </subcellularLocation>
</comment>
<comment type="developmental stage">
    <text evidence="2 3">Expressed in all blastomeres at the 8-cell stage (PubMed:26178919). Detected in the ventricular zone (VZ) of the forebrain at 9.5 dpc. Clearly detected until 12.5 dpc, the expression decreases and disappears by 15.5 dpc (PubMed:19906856).</text>
</comment>
<comment type="disruption phenotype">
    <text evidence="3">Knockout embryos die before preimplantation.</text>
</comment>
<comment type="similarity">
    <text evidence="5">Belongs to the nepro family.</text>
</comment>
<gene>
    <name evidence="4 6" type="primary">Nepro</name>
</gene>
<organism>
    <name type="scientific">Mus musculus</name>
    <name type="common">Mouse</name>
    <dbReference type="NCBI Taxonomy" id="10090"/>
    <lineage>
        <taxon>Eukaryota</taxon>
        <taxon>Metazoa</taxon>
        <taxon>Chordata</taxon>
        <taxon>Craniata</taxon>
        <taxon>Vertebrata</taxon>
        <taxon>Euteleostomi</taxon>
        <taxon>Mammalia</taxon>
        <taxon>Eutheria</taxon>
        <taxon>Euarchontoglires</taxon>
        <taxon>Glires</taxon>
        <taxon>Rodentia</taxon>
        <taxon>Myomorpha</taxon>
        <taxon>Muroidea</taxon>
        <taxon>Muridae</taxon>
        <taxon>Murinae</taxon>
        <taxon>Mus</taxon>
        <taxon>Mus</taxon>
    </lineage>
</organism>
<proteinExistence type="evidence at transcript level"/>
<accession>Q8R2U2</accession>
<name>NEPRO_MOUSE</name>
<reference key="1">
    <citation type="journal article" date="2005" name="Science">
        <title>The transcriptional landscape of the mammalian genome.</title>
        <authorList>
            <person name="Carninci P."/>
            <person name="Kasukawa T."/>
            <person name="Katayama S."/>
            <person name="Gough J."/>
            <person name="Frith M.C."/>
            <person name="Maeda N."/>
            <person name="Oyama R."/>
            <person name="Ravasi T."/>
            <person name="Lenhard B."/>
            <person name="Wells C."/>
            <person name="Kodzius R."/>
            <person name="Shimokawa K."/>
            <person name="Bajic V.B."/>
            <person name="Brenner S.E."/>
            <person name="Batalov S."/>
            <person name="Forrest A.R."/>
            <person name="Zavolan M."/>
            <person name="Davis M.J."/>
            <person name="Wilming L.G."/>
            <person name="Aidinis V."/>
            <person name="Allen J.E."/>
            <person name="Ambesi-Impiombato A."/>
            <person name="Apweiler R."/>
            <person name="Aturaliya R.N."/>
            <person name="Bailey T.L."/>
            <person name="Bansal M."/>
            <person name="Baxter L."/>
            <person name="Beisel K.W."/>
            <person name="Bersano T."/>
            <person name="Bono H."/>
            <person name="Chalk A.M."/>
            <person name="Chiu K.P."/>
            <person name="Choudhary V."/>
            <person name="Christoffels A."/>
            <person name="Clutterbuck D.R."/>
            <person name="Crowe M.L."/>
            <person name="Dalla E."/>
            <person name="Dalrymple B.P."/>
            <person name="de Bono B."/>
            <person name="Della Gatta G."/>
            <person name="di Bernardo D."/>
            <person name="Down T."/>
            <person name="Engstrom P."/>
            <person name="Fagiolini M."/>
            <person name="Faulkner G."/>
            <person name="Fletcher C.F."/>
            <person name="Fukushima T."/>
            <person name="Furuno M."/>
            <person name="Futaki S."/>
            <person name="Gariboldi M."/>
            <person name="Georgii-Hemming P."/>
            <person name="Gingeras T.R."/>
            <person name="Gojobori T."/>
            <person name="Green R.E."/>
            <person name="Gustincich S."/>
            <person name="Harbers M."/>
            <person name="Hayashi Y."/>
            <person name="Hensch T.K."/>
            <person name="Hirokawa N."/>
            <person name="Hill D."/>
            <person name="Huminiecki L."/>
            <person name="Iacono M."/>
            <person name="Ikeo K."/>
            <person name="Iwama A."/>
            <person name="Ishikawa T."/>
            <person name="Jakt M."/>
            <person name="Kanapin A."/>
            <person name="Katoh M."/>
            <person name="Kawasawa Y."/>
            <person name="Kelso J."/>
            <person name="Kitamura H."/>
            <person name="Kitano H."/>
            <person name="Kollias G."/>
            <person name="Krishnan S.P."/>
            <person name="Kruger A."/>
            <person name="Kummerfeld S.K."/>
            <person name="Kurochkin I.V."/>
            <person name="Lareau L.F."/>
            <person name="Lazarevic D."/>
            <person name="Lipovich L."/>
            <person name="Liu J."/>
            <person name="Liuni S."/>
            <person name="McWilliam S."/>
            <person name="Madan Babu M."/>
            <person name="Madera M."/>
            <person name="Marchionni L."/>
            <person name="Matsuda H."/>
            <person name="Matsuzawa S."/>
            <person name="Miki H."/>
            <person name="Mignone F."/>
            <person name="Miyake S."/>
            <person name="Morris K."/>
            <person name="Mottagui-Tabar S."/>
            <person name="Mulder N."/>
            <person name="Nakano N."/>
            <person name="Nakauchi H."/>
            <person name="Ng P."/>
            <person name="Nilsson R."/>
            <person name="Nishiguchi S."/>
            <person name="Nishikawa S."/>
            <person name="Nori F."/>
            <person name="Ohara O."/>
            <person name="Okazaki Y."/>
            <person name="Orlando V."/>
            <person name="Pang K.C."/>
            <person name="Pavan W.J."/>
            <person name="Pavesi G."/>
            <person name="Pesole G."/>
            <person name="Petrovsky N."/>
            <person name="Piazza S."/>
            <person name="Reed J."/>
            <person name="Reid J.F."/>
            <person name="Ring B.Z."/>
            <person name="Ringwald M."/>
            <person name="Rost B."/>
            <person name="Ruan Y."/>
            <person name="Salzberg S.L."/>
            <person name="Sandelin A."/>
            <person name="Schneider C."/>
            <person name="Schoenbach C."/>
            <person name="Sekiguchi K."/>
            <person name="Semple C.A."/>
            <person name="Seno S."/>
            <person name="Sessa L."/>
            <person name="Sheng Y."/>
            <person name="Shibata Y."/>
            <person name="Shimada H."/>
            <person name="Shimada K."/>
            <person name="Silva D."/>
            <person name="Sinclair B."/>
            <person name="Sperling S."/>
            <person name="Stupka E."/>
            <person name="Sugiura K."/>
            <person name="Sultana R."/>
            <person name="Takenaka Y."/>
            <person name="Taki K."/>
            <person name="Tammoja K."/>
            <person name="Tan S.L."/>
            <person name="Tang S."/>
            <person name="Taylor M.S."/>
            <person name="Tegner J."/>
            <person name="Teichmann S.A."/>
            <person name="Ueda H.R."/>
            <person name="van Nimwegen E."/>
            <person name="Verardo R."/>
            <person name="Wei C.L."/>
            <person name="Yagi K."/>
            <person name="Yamanishi H."/>
            <person name="Zabarovsky E."/>
            <person name="Zhu S."/>
            <person name="Zimmer A."/>
            <person name="Hide W."/>
            <person name="Bult C."/>
            <person name="Grimmond S.M."/>
            <person name="Teasdale R.D."/>
            <person name="Liu E.T."/>
            <person name="Brusic V."/>
            <person name="Quackenbush J."/>
            <person name="Wahlestedt C."/>
            <person name="Mattick J.S."/>
            <person name="Hume D.A."/>
            <person name="Kai C."/>
            <person name="Sasaki D."/>
            <person name="Tomaru Y."/>
            <person name="Fukuda S."/>
            <person name="Kanamori-Katayama M."/>
            <person name="Suzuki M."/>
            <person name="Aoki J."/>
            <person name="Arakawa T."/>
            <person name="Iida J."/>
            <person name="Imamura K."/>
            <person name="Itoh M."/>
            <person name="Kato T."/>
            <person name="Kawaji H."/>
            <person name="Kawagashira N."/>
            <person name="Kawashima T."/>
            <person name="Kojima M."/>
            <person name="Kondo S."/>
            <person name="Konno H."/>
            <person name="Nakano K."/>
            <person name="Ninomiya N."/>
            <person name="Nishio T."/>
            <person name="Okada M."/>
            <person name="Plessy C."/>
            <person name="Shibata K."/>
            <person name="Shiraki T."/>
            <person name="Suzuki S."/>
            <person name="Tagami M."/>
            <person name="Waki K."/>
            <person name="Watahiki A."/>
            <person name="Okamura-Oho Y."/>
            <person name="Suzuki H."/>
            <person name="Kawai J."/>
            <person name="Hayashizaki Y."/>
        </authorList>
    </citation>
    <scope>NUCLEOTIDE SEQUENCE [LARGE SCALE MRNA]</scope>
    <source>
        <tissue>Lung</tissue>
    </source>
</reference>
<reference key="2">
    <citation type="journal article" date="2009" name="PLoS Biol.">
        <title>Lineage-specific biology revealed by a finished genome assembly of the mouse.</title>
        <authorList>
            <person name="Church D.M."/>
            <person name="Goodstadt L."/>
            <person name="Hillier L.W."/>
            <person name="Zody M.C."/>
            <person name="Goldstein S."/>
            <person name="She X."/>
            <person name="Bult C.J."/>
            <person name="Agarwala R."/>
            <person name="Cherry J.L."/>
            <person name="DiCuccio M."/>
            <person name="Hlavina W."/>
            <person name="Kapustin Y."/>
            <person name="Meric P."/>
            <person name="Maglott D."/>
            <person name="Birtle Z."/>
            <person name="Marques A.C."/>
            <person name="Graves T."/>
            <person name="Zhou S."/>
            <person name="Teague B."/>
            <person name="Potamousis K."/>
            <person name="Churas C."/>
            <person name="Place M."/>
            <person name="Herschleb J."/>
            <person name="Runnheim R."/>
            <person name="Forrest D."/>
            <person name="Amos-Landgraf J."/>
            <person name="Schwartz D.C."/>
            <person name="Cheng Z."/>
            <person name="Lindblad-Toh K."/>
            <person name="Eichler E.E."/>
            <person name="Ponting C.P."/>
        </authorList>
    </citation>
    <scope>NUCLEOTIDE SEQUENCE [LARGE SCALE GENOMIC DNA]</scope>
    <source>
        <strain>C57BL/6J</strain>
    </source>
</reference>
<reference key="3">
    <citation type="submission" date="2005-07" db="EMBL/GenBank/DDBJ databases">
        <authorList>
            <person name="Mural R.J."/>
            <person name="Adams M.D."/>
            <person name="Myers E.W."/>
            <person name="Smith H.O."/>
            <person name="Venter J.C."/>
        </authorList>
    </citation>
    <scope>NUCLEOTIDE SEQUENCE [LARGE SCALE GENOMIC DNA]</scope>
</reference>
<reference key="4">
    <citation type="journal article" date="2004" name="Genome Res.">
        <title>The status, quality, and expansion of the NIH full-length cDNA project: the Mammalian Gene Collection (MGC).</title>
        <authorList>
            <consortium name="The MGC Project Team"/>
        </authorList>
    </citation>
    <scope>NUCLEOTIDE SEQUENCE [LARGE SCALE MRNA]</scope>
    <source>
        <strain>FVB/N</strain>
        <tissue>Mammary tumor</tissue>
    </source>
</reference>
<reference key="5">
    <citation type="journal article" date="2009" name="Development">
        <title>Identification of Nepro, a gene required for the maintenance of neocortex neural progenitor cells downstream of Notch.</title>
        <authorList>
            <person name="Muroyama Y."/>
            <person name="Saito T."/>
        </authorList>
    </citation>
    <scope>FUNCTION</scope>
    <scope>SUBCELLULAR LOCATION</scope>
    <scope>DEVELOPMENTAL STAGE</scope>
    <scope>REGION</scope>
</reference>
<reference key="6">
    <citation type="journal article" date="2015" name="Dev. Growth Differ.">
        <title>Nepro is localized in the nucleolus and essential for preimplantation development in mice.</title>
        <authorList>
            <person name="Hashimoto M."/>
            <person name="Sato T."/>
            <person name="Muroyama Y."/>
            <person name="Fujimura L."/>
            <person name="Hatano M."/>
            <person name="Saito T."/>
        </authorList>
    </citation>
    <scope>FUNCTION</scope>
    <scope>SUBCELLULAR LOCATION</scope>
    <scope>DISRUPTION PHENOTYPE</scope>
    <scope>DEVELOPMENTAL STAGE</scope>
</reference>
<dbReference type="EMBL" id="AK144612">
    <property type="protein sequence ID" value="BAE25969.1"/>
    <property type="molecule type" value="mRNA"/>
</dbReference>
<dbReference type="EMBL" id="AC122217">
    <property type="status" value="NOT_ANNOTATED_CDS"/>
    <property type="molecule type" value="Genomic_DNA"/>
</dbReference>
<dbReference type="EMBL" id="AC124180">
    <property type="status" value="NOT_ANNOTATED_CDS"/>
    <property type="molecule type" value="Genomic_DNA"/>
</dbReference>
<dbReference type="EMBL" id="CH466521">
    <property type="protein sequence ID" value="EDK98047.1"/>
    <property type="molecule type" value="Genomic_DNA"/>
</dbReference>
<dbReference type="EMBL" id="BC027231">
    <property type="protein sequence ID" value="AAH27231.1"/>
    <property type="molecule type" value="mRNA"/>
</dbReference>
<dbReference type="CCDS" id="CCDS28187.1"/>
<dbReference type="RefSeq" id="NP_666084.1">
    <property type="nucleotide sequence ID" value="NM_145972.5"/>
</dbReference>
<dbReference type="FunCoup" id="Q8R2U2">
    <property type="interactions" value="3604"/>
</dbReference>
<dbReference type="STRING" id="10090.ENSMUSP00000038779"/>
<dbReference type="iPTMnet" id="Q8R2U2"/>
<dbReference type="PhosphoSitePlus" id="Q8R2U2"/>
<dbReference type="PaxDb" id="10090-ENSMUSP00000038779"/>
<dbReference type="PeptideAtlas" id="Q8R2U2"/>
<dbReference type="ProteomicsDB" id="287479"/>
<dbReference type="Pumba" id="Q8R2U2"/>
<dbReference type="Antibodypedia" id="32543">
    <property type="antibodies" value="88 antibodies from 18 providers"/>
</dbReference>
<dbReference type="DNASU" id="212547"/>
<dbReference type="Ensembl" id="ENSMUST00000048788.14">
    <property type="protein sequence ID" value="ENSMUSP00000038779.8"/>
    <property type="gene ID" value="ENSMUSG00000036208.14"/>
</dbReference>
<dbReference type="GeneID" id="212547"/>
<dbReference type="KEGG" id="mmu:212547"/>
<dbReference type="UCSC" id="uc007zho.2">
    <property type="organism name" value="mouse"/>
</dbReference>
<dbReference type="AGR" id="MGI:2384836"/>
<dbReference type="CTD" id="25871"/>
<dbReference type="MGI" id="MGI:2384836">
    <property type="gene designation" value="Nepro"/>
</dbReference>
<dbReference type="VEuPathDB" id="HostDB:ENSMUSG00000036208"/>
<dbReference type="eggNOG" id="ENOG502QTP3">
    <property type="taxonomic scope" value="Eukaryota"/>
</dbReference>
<dbReference type="GeneTree" id="ENSGT00390000007644"/>
<dbReference type="HOGENOM" id="CLU_035014_0_0_1"/>
<dbReference type="InParanoid" id="Q8R2U2"/>
<dbReference type="OMA" id="EFVLMKI"/>
<dbReference type="OrthoDB" id="9899341at2759"/>
<dbReference type="PhylomeDB" id="Q8R2U2"/>
<dbReference type="TreeFam" id="TF335999"/>
<dbReference type="BioGRID-ORCS" id="212547">
    <property type="hits" value="11 hits in 48 CRISPR screens"/>
</dbReference>
<dbReference type="PRO" id="PR:Q8R2U2"/>
<dbReference type="Proteomes" id="UP000000589">
    <property type="component" value="Chromosome 16"/>
</dbReference>
<dbReference type="RNAct" id="Q8R2U2">
    <property type="molecule type" value="protein"/>
</dbReference>
<dbReference type="Bgee" id="ENSMUSG00000036208">
    <property type="expression patterns" value="Expressed in cerebral cortex marginal layer and 224 other cell types or tissues"/>
</dbReference>
<dbReference type="ExpressionAtlas" id="Q8R2U2">
    <property type="expression patterns" value="baseline and differential"/>
</dbReference>
<dbReference type="GO" id="GO:0005730">
    <property type="term" value="C:nucleolus"/>
    <property type="evidence" value="ECO:0000314"/>
    <property type="project" value="UniProtKB"/>
</dbReference>
<dbReference type="GO" id="GO:0005634">
    <property type="term" value="C:nucleus"/>
    <property type="evidence" value="ECO:0000314"/>
    <property type="project" value="MGI"/>
</dbReference>
<dbReference type="GO" id="GO:0045665">
    <property type="term" value="P:negative regulation of neuron differentiation"/>
    <property type="evidence" value="ECO:0000314"/>
    <property type="project" value="MGI"/>
</dbReference>
<dbReference type="GO" id="GO:0045747">
    <property type="term" value="P:positive regulation of Notch signaling pathway"/>
    <property type="evidence" value="ECO:0000315"/>
    <property type="project" value="MGI"/>
</dbReference>
<dbReference type="InterPro" id="IPR052835">
    <property type="entry name" value="Nepro-associated"/>
</dbReference>
<dbReference type="InterPro" id="IPR027951">
    <property type="entry name" value="Nepro_N"/>
</dbReference>
<dbReference type="PANTHER" id="PTHR34761">
    <property type="entry name" value="NUCLEOLUS AND NEURAL PROGENITOR PROTEIN"/>
    <property type="match status" value="1"/>
</dbReference>
<dbReference type="PANTHER" id="PTHR34761:SF1">
    <property type="entry name" value="NUCLEOLUS AND NEURAL PROGENITOR PROTEIN"/>
    <property type="match status" value="1"/>
</dbReference>
<dbReference type="Pfam" id="PF14780">
    <property type="entry name" value="NEPRO_N"/>
    <property type="match status" value="1"/>
</dbReference>
<evidence type="ECO:0000256" key="1">
    <source>
        <dbReference type="SAM" id="MobiDB-lite"/>
    </source>
</evidence>
<evidence type="ECO:0000269" key="2">
    <source>
    </source>
</evidence>
<evidence type="ECO:0000269" key="3">
    <source>
    </source>
</evidence>
<evidence type="ECO:0000303" key="4">
    <source>
    </source>
</evidence>
<evidence type="ECO:0000305" key="5"/>
<evidence type="ECO:0000312" key="6">
    <source>
        <dbReference type="MGI" id="MGI:2384836"/>
    </source>
</evidence>
<keyword id="KW-0217">Developmental protein</keyword>
<keyword id="KW-0539">Nucleus</keyword>
<keyword id="KW-1185">Reference proteome</keyword>
<feature type="chain" id="PRO_0000434895" description="Nucleolus and neural progenitor protein">
    <location>
        <begin position="1"/>
        <end position="564"/>
    </location>
</feature>
<feature type="region of interest" description="Disordered" evidence="1">
    <location>
        <begin position="431"/>
        <end position="495"/>
    </location>
</feature>
<feature type="region of interest" description="Nuclear localization signal" evidence="4">
    <location>
        <begin position="442"/>
        <end position="460"/>
    </location>
</feature>
<feature type="compositionally biased region" description="Basic residues" evidence="1">
    <location>
        <begin position="442"/>
        <end position="459"/>
    </location>
</feature>
<feature type="compositionally biased region" description="Polar residues" evidence="1">
    <location>
        <begin position="460"/>
        <end position="473"/>
    </location>
</feature>
<sequence length="564" mass="63394">MAAAVRPGAEPWNRVRIPQAGNCSTLTVRDPSATLDICTAAVTKGCHLVTQSLKSQTLDAEVDVLCSVLYSNHNRLGHHKPHLALRQVEQCLKRLKHMNLEGSIEDLSQLLSANATQPGATENRVVPSQPVVEVVLMKVLGGCKLLLRLLDCCCKAFLLTVKHLGLKEFIILNLVMVGLVSRLWVLHKGLLRRLISLYEPLLSLRQEISSIHPMPYFKDFAFPSDITDFLGPSYLEVFKVKTPAASATKGVTKLLNKLFLMREQLPKMNEDTLDRLSKPSEQMTSNPQSTVDLGQPVKACKRTRKEKPLGFDLRAFCTRLGNKATQETNRDFKYSQSKLKTTKLPSQQLRTHWANDTVQRIRKTKTFAQLSEEIEMAIVWSRSKKLKTQATFLGNKLLKSNRFRHVESQGYSLTKKLQCMKTSLCNCLLRGSRTSTSEHPPRQRRSKYKVLSRQRKPQRKLQSTLLKETQQVPEGTLKNTRDSSAKRRCSGTVQRSDVCPNGKQVLRKLAKPDLKTKVVVHGNLTGGSRNESGFQAKTQMHTHNAPDTAKEADDIDDIFALMGV</sequence>
<protein>
    <recommendedName>
        <fullName evidence="5">Nucleolus and neural progenitor protein</fullName>
    </recommendedName>
    <alternativeName>
        <fullName evidence="4">Neural progenitor protein</fullName>
    </alternativeName>
</protein>